<sequence>MSKKKKKSPGTLAENRKARHDYNIEDTIEAGIVLRGTEIKSIRRGSANLKDSFAQVKNGEIYVHNMHIAPYEEGNRFNHDPLRPRKLLLHKREIEKLGTRTREIGYSIIPLKLYLKHGVCKVLIGVARGKKKYDKRQDLKDKAVKRDMQRAMKDRY</sequence>
<gene>
    <name evidence="1" type="primary">smpB</name>
    <name type="ordered locus">Sca_0433</name>
</gene>
<protein>
    <recommendedName>
        <fullName evidence="1">SsrA-binding protein</fullName>
    </recommendedName>
    <alternativeName>
        <fullName evidence="1">Small protein B</fullName>
    </alternativeName>
</protein>
<reference key="1">
    <citation type="journal article" date="2009" name="Appl. Environ. Microbiol.">
        <title>Genome analysis of the meat starter culture bacterium Staphylococcus carnosus TM300.</title>
        <authorList>
            <person name="Rosenstein R."/>
            <person name="Nerz C."/>
            <person name="Biswas L."/>
            <person name="Resch A."/>
            <person name="Raddatz G."/>
            <person name="Schuster S.C."/>
            <person name="Goetz F."/>
        </authorList>
    </citation>
    <scope>NUCLEOTIDE SEQUENCE [LARGE SCALE GENOMIC DNA]</scope>
    <source>
        <strain>TM300</strain>
    </source>
</reference>
<proteinExistence type="inferred from homology"/>
<feature type="chain" id="PRO_1000197624" description="SsrA-binding protein">
    <location>
        <begin position="1"/>
        <end position="156"/>
    </location>
</feature>
<comment type="function">
    <text evidence="1">Required for rescue of stalled ribosomes mediated by trans-translation. Binds to transfer-messenger RNA (tmRNA), required for stable association of tmRNA with ribosomes. tmRNA and SmpB together mimic tRNA shape, replacing the anticodon stem-loop with SmpB. tmRNA is encoded by the ssrA gene; the 2 termini fold to resemble tRNA(Ala) and it encodes a 'tag peptide', a short internal open reading frame. During trans-translation Ala-aminoacylated tmRNA acts like a tRNA, entering the A-site of stalled ribosomes, displacing the stalled mRNA. The ribosome then switches to translate the ORF on the tmRNA; the nascent peptide is terminated with the 'tag peptide' encoded by the tmRNA and targeted for degradation. The ribosome is freed to recommence translation, which seems to be the essential function of trans-translation.</text>
</comment>
<comment type="subcellular location">
    <subcellularLocation>
        <location evidence="1">Cytoplasm</location>
    </subcellularLocation>
    <text evidence="1">The tmRNA-SmpB complex associates with stalled 70S ribosomes.</text>
</comment>
<comment type="similarity">
    <text evidence="1">Belongs to the SmpB family.</text>
</comment>
<organism>
    <name type="scientific">Staphylococcus carnosus (strain TM300)</name>
    <dbReference type="NCBI Taxonomy" id="396513"/>
    <lineage>
        <taxon>Bacteria</taxon>
        <taxon>Bacillati</taxon>
        <taxon>Bacillota</taxon>
        <taxon>Bacilli</taxon>
        <taxon>Bacillales</taxon>
        <taxon>Staphylococcaceae</taxon>
        <taxon>Staphylococcus</taxon>
    </lineage>
</organism>
<dbReference type="EMBL" id="AM295250">
    <property type="protein sequence ID" value="CAL27347.1"/>
    <property type="molecule type" value="Genomic_DNA"/>
</dbReference>
<dbReference type="RefSeq" id="WP_015899691.1">
    <property type="nucleotide sequence ID" value="NC_012121.1"/>
</dbReference>
<dbReference type="SMR" id="B9DJK4"/>
<dbReference type="GeneID" id="93795364"/>
<dbReference type="KEGG" id="sca:SCA_0433"/>
<dbReference type="eggNOG" id="COG0691">
    <property type="taxonomic scope" value="Bacteria"/>
</dbReference>
<dbReference type="HOGENOM" id="CLU_108953_0_0_9"/>
<dbReference type="OrthoDB" id="9805462at2"/>
<dbReference type="BioCyc" id="SCAR396513:SCA_RS02205-MONOMER"/>
<dbReference type="Proteomes" id="UP000000444">
    <property type="component" value="Chromosome"/>
</dbReference>
<dbReference type="GO" id="GO:0005829">
    <property type="term" value="C:cytosol"/>
    <property type="evidence" value="ECO:0007669"/>
    <property type="project" value="TreeGrafter"/>
</dbReference>
<dbReference type="GO" id="GO:0003723">
    <property type="term" value="F:RNA binding"/>
    <property type="evidence" value="ECO:0007669"/>
    <property type="project" value="UniProtKB-UniRule"/>
</dbReference>
<dbReference type="GO" id="GO:0070929">
    <property type="term" value="P:trans-translation"/>
    <property type="evidence" value="ECO:0007669"/>
    <property type="project" value="UniProtKB-UniRule"/>
</dbReference>
<dbReference type="CDD" id="cd09294">
    <property type="entry name" value="SmpB"/>
    <property type="match status" value="1"/>
</dbReference>
<dbReference type="Gene3D" id="2.40.280.10">
    <property type="match status" value="1"/>
</dbReference>
<dbReference type="HAMAP" id="MF_00023">
    <property type="entry name" value="SmpB"/>
    <property type="match status" value="1"/>
</dbReference>
<dbReference type="InterPro" id="IPR023620">
    <property type="entry name" value="SmpB"/>
</dbReference>
<dbReference type="InterPro" id="IPR000037">
    <property type="entry name" value="SsrA-bd_prot"/>
</dbReference>
<dbReference type="InterPro" id="IPR020081">
    <property type="entry name" value="SsrA-bd_prot_CS"/>
</dbReference>
<dbReference type="NCBIfam" id="NF003843">
    <property type="entry name" value="PRK05422.1"/>
    <property type="match status" value="1"/>
</dbReference>
<dbReference type="NCBIfam" id="TIGR00086">
    <property type="entry name" value="smpB"/>
    <property type="match status" value="1"/>
</dbReference>
<dbReference type="PANTHER" id="PTHR30308:SF2">
    <property type="entry name" value="SSRA-BINDING PROTEIN"/>
    <property type="match status" value="1"/>
</dbReference>
<dbReference type="PANTHER" id="PTHR30308">
    <property type="entry name" value="TMRNA-BINDING COMPONENT OF TRANS-TRANSLATION TAGGING COMPLEX"/>
    <property type="match status" value="1"/>
</dbReference>
<dbReference type="Pfam" id="PF01668">
    <property type="entry name" value="SmpB"/>
    <property type="match status" value="1"/>
</dbReference>
<dbReference type="SUPFAM" id="SSF74982">
    <property type="entry name" value="Small protein B (SmpB)"/>
    <property type="match status" value="1"/>
</dbReference>
<dbReference type="PROSITE" id="PS01317">
    <property type="entry name" value="SSRP"/>
    <property type="match status" value="1"/>
</dbReference>
<accession>B9DJK4</accession>
<evidence type="ECO:0000255" key="1">
    <source>
        <dbReference type="HAMAP-Rule" id="MF_00023"/>
    </source>
</evidence>
<keyword id="KW-0963">Cytoplasm</keyword>
<keyword id="KW-1185">Reference proteome</keyword>
<keyword id="KW-0694">RNA-binding</keyword>
<name>SSRP_STACT</name>